<proteinExistence type="inferred from homology"/>
<reference key="1">
    <citation type="journal article" date="2007" name="PLoS ONE">
        <title>The complete genome sequence and analysis of the Epsilonproteobacterium Arcobacter butzleri.</title>
        <authorList>
            <person name="Miller W.G."/>
            <person name="Parker C.T."/>
            <person name="Rubenfield M."/>
            <person name="Mendz G.L."/>
            <person name="Woesten M.M.S.M."/>
            <person name="Ussery D.W."/>
            <person name="Stolz J.F."/>
            <person name="Binnewies T.T."/>
            <person name="Hallin P.F."/>
            <person name="Wang G."/>
            <person name="Malek J.A."/>
            <person name="Rogosin A."/>
            <person name="Stanker L.H."/>
            <person name="Mandrell R.E."/>
        </authorList>
    </citation>
    <scope>NUCLEOTIDE SEQUENCE [LARGE SCALE GENOMIC DNA]</scope>
    <source>
        <strain>RM4018</strain>
    </source>
</reference>
<gene>
    <name evidence="1" type="primary">hisF</name>
    <name type="ordered locus">Abu_0054</name>
</gene>
<comment type="function">
    <text evidence="1">IGPS catalyzes the conversion of PRFAR and glutamine to IGP, AICAR and glutamate. The HisF subunit catalyzes the cyclization activity that produces IGP and AICAR from PRFAR using the ammonia provided by the HisH subunit.</text>
</comment>
<comment type="catalytic activity">
    <reaction evidence="1">
        <text>5-[(5-phospho-1-deoxy-D-ribulos-1-ylimino)methylamino]-1-(5-phospho-beta-D-ribosyl)imidazole-4-carboxamide + L-glutamine = D-erythro-1-(imidazol-4-yl)glycerol 3-phosphate + 5-amino-1-(5-phospho-beta-D-ribosyl)imidazole-4-carboxamide + L-glutamate + H(+)</text>
        <dbReference type="Rhea" id="RHEA:24793"/>
        <dbReference type="ChEBI" id="CHEBI:15378"/>
        <dbReference type="ChEBI" id="CHEBI:29985"/>
        <dbReference type="ChEBI" id="CHEBI:58278"/>
        <dbReference type="ChEBI" id="CHEBI:58359"/>
        <dbReference type="ChEBI" id="CHEBI:58475"/>
        <dbReference type="ChEBI" id="CHEBI:58525"/>
        <dbReference type="EC" id="4.3.2.10"/>
    </reaction>
</comment>
<comment type="pathway">
    <text evidence="1">Amino-acid biosynthesis; L-histidine biosynthesis; L-histidine from 5-phospho-alpha-D-ribose 1-diphosphate: step 5/9.</text>
</comment>
<comment type="subunit">
    <text evidence="1">Heterodimer of HisH and HisF.</text>
</comment>
<comment type="subcellular location">
    <subcellularLocation>
        <location evidence="1">Cytoplasm</location>
    </subcellularLocation>
</comment>
<comment type="similarity">
    <text evidence="1">Belongs to the HisA/HisF family.</text>
</comment>
<organism>
    <name type="scientific">Aliarcobacter butzleri (strain RM4018)</name>
    <name type="common">Arcobacter butzleri</name>
    <dbReference type="NCBI Taxonomy" id="367737"/>
    <lineage>
        <taxon>Bacteria</taxon>
        <taxon>Pseudomonadati</taxon>
        <taxon>Campylobacterota</taxon>
        <taxon>Epsilonproteobacteria</taxon>
        <taxon>Campylobacterales</taxon>
        <taxon>Arcobacteraceae</taxon>
        <taxon>Aliarcobacter</taxon>
    </lineage>
</organism>
<accession>A8EQW5</accession>
<feature type="chain" id="PRO_1000063021" description="Imidazole glycerol phosphate synthase subunit HisF">
    <location>
        <begin position="1"/>
        <end position="253"/>
    </location>
</feature>
<feature type="active site" evidence="1">
    <location>
        <position position="13"/>
    </location>
</feature>
<feature type="active site" evidence="1">
    <location>
        <position position="132"/>
    </location>
</feature>
<evidence type="ECO:0000255" key="1">
    <source>
        <dbReference type="HAMAP-Rule" id="MF_01013"/>
    </source>
</evidence>
<protein>
    <recommendedName>
        <fullName evidence="1">Imidazole glycerol phosphate synthase subunit HisF</fullName>
        <ecNumber evidence="1">4.3.2.10</ecNumber>
    </recommendedName>
    <alternativeName>
        <fullName evidence="1">IGP synthase cyclase subunit</fullName>
    </alternativeName>
    <alternativeName>
        <fullName evidence="1">IGP synthase subunit HisF</fullName>
    </alternativeName>
    <alternativeName>
        <fullName evidence="1">ImGP synthase subunit HisF</fullName>
        <shortName evidence="1">IGPS subunit HisF</shortName>
    </alternativeName>
</protein>
<sequence length="253" mass="27289">MSSFAKRIIPCLDVDNGRVVKGVNFVGLRDAGDPVEVAKRYNSEGADEITFLDITASHENRGTIVDIVKKVAQEVFIPLTVGGGIRKLEDIYSLLNVGCDKVSINSSAVTNPNLINESSKRFGSQCIVVAIDVKRVADGSYHVFVKGGREDTGLDALSWAKEVYDRGAGEILLTSMDTDGAKTGFELNITRQVSNLVDIPVIASGGAGSMEHIKEAFENGASAALAASIFHFKEIDIMDLKKYLRANNIPVRI</sequence>
<keyword id="KW-0028">Amino-acid biosynthesis</keyword>
<keyword id="KW-0963">Cytoplasm</keyword>
<keyword id="KW-0368">Histidine biosynthesis</keyword>
<keyword id="KW-0456">Lyase</keyword>
<keyword id="KW-1185">Reference proteome</keyword>
<name>HIS6_ALIB4</name>
<dbReference type="EC" id="4.3.2.10" evidence="1"/>
<dbReference type="EMBL" id="CP000361">
    <property type="protein sequence ID" value="ABV66339.1"/>
    <property type="molecule type" value="Genomic_DNA"/>
</dbReference>
<dbReference type="RefSeq" id="WP_004510095.1">
    <property type="nucleotide sequence ID" value="NC_009850.1"/>
</dbReference>
<dbReference type="SMR" id="A8EQW5"/>
<dbReference type="STRING" id="367737.Abu_0054"/>
<dbReference type="GeneID" id="24305598"/>
<dbReference type="KEGG" id="abu:Abu_0054"/>
<dbReference type="eggNOG" id="COG0107">
    <property type="taxonomic scope" value="Bacteria"/>
</dbReference>
<dbReference type="HOGENOM" id="CLU_048577_4_0_7"/>
<dbReference type="UniPathway" id="UPA00031">
    <property type="reaction ID" value="UER00010"/>
</dbReference>
<dbReference type="Proteomes" id="UP000001136">
    <property type="component" value="Chromosome"/>
</dbReference>
<dbReference type="GO" id="GO:0005737">
    <property type="term" value="C:cytoplasm"/>
    <property type="evidence" value="ECO:0007669"/>
    <property type="project" value="UniProtKB-SubCell"/>
</dbReference>
<dbReference type="GO" id="GO:0000107">
    <property type="term" value="F:imidazoleglycerol-phosphate synthase activity"/>
    <property type="evidence" value="ECO:0007669"/>
    <property type="project" value="UniProtKB-UniRule"/>
</dbReference>
<dbReference type="GO" id="GO:0016829">
    <property type="term" value="F:lyase activity"/>
    <property type="evidence" value="ECO:0007669"/>
    <property type="project" value="UniProtKB-KW"/>
</dbReference>
<dbReference type="GO" id="GO:0000105">
    <property type="term" value="P:L-histidine biosynthetic process"/>
    <property type="evidence" value="ECO:0007669"/>
    <property type="project" value="UniProtKB-UniRule"/>
</dbReference>
<dbReference type="CDD" id="cd04731">
    <property type="entry name" value="HisF"/>
    <property type="match status" value="1"/>
</dbReference>
<dbReference type="FunFam" id="3.20.20.70:FF:000006">
    <property type="entry name" value="Imidazole glycerol phosphate synthase subunit HisF"/>
    <property type="match status" value="1"/>
</dbReference>
<dbReference type="Gene3D" id="3.20.20.70">
    <property type="entry name" value="Aldolase class I"/>
    <property type="match status" value="1"/>
</dbReference>
<dbReference type="HAMAP" id="MF_01013">
    <property type="entry name" value="HisF"/>
    <property type="match status" value="1"/>
</dbReference>
<dbReference type="InterPro" id="IPR013785">
    <property type="entry name" value="Aldolase_TIM"/>
</dbReference>
<dbReference type="InterPro" id="IPR006062">
    <property type="entry name" value="His_biosynth"/>
</dbReference>
<dbReference type="InterPro" id="IPR004651">
    <property type="entry name" value="HisF"/>
</dbReference>
<dbReference type="InterPro" id="IPR050064">
    <property type="entry name" value="IGPS_HisA/HisF"/>
</dbReference>
<dbReference type="InterPro" id="IPR011060">
    <property type="entry name" value="RibuloseP-bd_barrel"/>
</dbReference>
<dbReference type="NCBIfam" id="TIGR00735">
    <property type="entry name" value="hisF"/>
    <property type="match status" value="1"/>
</dbReference>
<dbReference type="PANTHER" id="PTHR21235:SF2">
    <property type="entry name" value="IMIDAZOLE GLYCEROL PHOSPHATE SYNTHASE HISHF"/>
    <property type="match status" value="1"/>
</dbReference>
<dbReference type="PANTHER" id="PTHR21235">
    <property type="entry name" value="IMIDAZOLE GLYCEROL PHOSPHATE SYNTHASE SUBUNIT HISF/H IGP SYNTHASE SUBUNIT HISF/H"/>
    <property type="match status" value="1"/>
</dbReference>
<dbReference type="Pfam" id="PF00977">
    <property type="entry name" value="His_biosynth"/>
    <property type="match status" value="1"/>
</dbReference>
<dbReference type="SUPFAM" id="SSF51366">
    <property type="entry name" value="Ribulose-phoshate binding barrel"/>
    <property type="match status" value="1"/>
</dbReference>